<name>CMOB_CAMJJ</name>
<evidence type="ECO:0000255" key="1">
    <source>
        <dbReference type="HAMAP-Rule" id="MF_01590"/>
    </source>
</evidence>
<keyword id="KW-0808">Transferase</keyword>
<keyword id="KW-0819">tRNA processing</keyword>
<comment type="function">
    <text evidence="1">Catalyzes carboxymethyl transfer from carboxy-S-adenosyl-L-methionine (Cx-SAM) to 5-hydroxyuridine (ho5U) to form 5-carboxymethoxyuridine (cmo5U) at position 34 in tRNAs.</text>
</comment>
<comment type="catalytic activity">
    <reaction evidence="1">
        <text>carboxy-S-adenosyl-L-methionine + 5-hydroxyuridine(34) in tRNA = 5-carboxymethoxyuridine(34) in tRNA + S-adenosyl-L-homocysteine + H(+)</text>
        <dbReference type="Rhea" id="RHEA:52848"/>
        <dbReference type="Rhea" id="RHEA-COMP:13381"/>
        <dbReference type="Rhea" id="RHEA-COMP:13383"/>
        <dbReference type="ChEBI" id="CHEBI:15378"/>
        <dbReference type="ChEBI" id="CHEBI:57856"/>
        <dbReference type="ChEBI" id="CHEBI:134278"/>
        <dbReference type="ChEBI" id="CHEBI:136877"/>
        <dbReference type="ChEBI" id="CHEBI:136879"/>
    </reaction>
</comment>
<comment type="subunit">
    <text evidence="1">Homotetramer.</text>
</comment>
<comment type="similarity">
    <text evidence="1">Belongs to the class I-like SAM-binding methyltransferase superfamily. CmoB family.</text>
</comment>
<reference key="1">
    <citation type="submission" date="2006-12" db="EMBL/GenBank/DDBJ databases">
        <authorList>
            <person name="Fouts D.E."/>
            <person name="Nelson K.E."/>
            <person name="Sebastian Y."/>
        </authorList>
    </citation>
    <scope>NUCLEOTIDE SEQUENCE [LARGE SCALE GENOMIC DNA]</scope>
    <source>
        <strain>81-176</strain>
    </source>
</reference>
<proteinExistence type="inferred from homology"/>
<dbReference type="EC" id="2.5.1.-" evidence="1"/>
<dbReference type="EMBL" id="CP000538">
    <property type="protein sequence ID" value="EAQ72100.1"/>
    <property type="molecule type" value="Genomic_DNA"/>
</dbReference>
<dbReference type="SMR" id="A1VZW5"/>
<dbReference type="KEGG" id="cjj:CJJ81176_0995"/>
<dbReference type="eggNOG" id="COG0500">
    <property type="taxonomic scope" value="Bacteria"/>
</dbReference>
<dbReference type="HOGENOM" id="CLU_052665_1_0_7"/>
<dbReference type="Proteomes" id="UP000000646">
    <property type="component" value="Chromosome"/>
</dbReference>
<dbReference type="GO" id="GO:0016765">
    <property type="term" value="F:transferase activity, transferring alkyl or aryl (other than methyl) groups"/>
    <property type="evidence" value="ECO:0007669"/>
    <property type="project" value="InterPro"/>
</dbReference>
<dbReference type="GO" id="GO:0002098">
    <property type="term" value="P:tRNA wobble uridine modification"/>
    <property type="evidence" value="ECO:0007669"/>
    <property type="project" value="InterPro"/>
</dbReference>
<dbReference type="CDD" id="cd02440">
    <property type="entry name" value="AdoMet_MTases"/>
    <property type="match status" value="1"/>
</dbReference>
<dbReference type="Gene3D" id="3.40.50.150">
    <property type="entry name" value="Vaccinia Virus protein VP39"/>
    <property type="match status" value="1"/>
</dbReference>
<dbReference type="HAMAP" id="MF_01590">
    <property type="entry name" value="tRNA_carboxymethyltr_CmoB"/>
    <property type="match status" value="1"/>
</dbReference>
<dbReference type="InterPro" id="IPR010017">
    <property type="entry name" value="CmoB"/>
</dbReference>
<dbReference type="InterPro" id="IPR027555">
    <property type="entry name" value="Mo5U34_MeTrfas-like"/>
</dbReference>
<dbReference type="InterPro" id="IPR029063">
    <property type="entry name" value="SAM-dependent_MTases_sf"/>
</dbReference>
<dbReference type="NCBIfam" id="NF011650">
    <property type="entry name" value="PRK15068.1"/>
    <property type="match status" value="1"/>
</dbReference>
<dbReference type="NCBIfam" id="TIGR00452">
    <property type="entry name" value="tRNA 5-methoxyuridine(34)/uridine 5-oxyacetic acid(34) synthase CmoB"/>
    <property type="match status" value="1"/>
</dbReference>
<dbReference type="PANTHER" id="PTHR43861:SF1">
    <property type="entry name" value="TRANS-ACONITATE 2-METHYLTRANSFERASE"/>
    <property type="match status" value="1"/>
</dbReference>
<dbReference type="PANTHER" id="PTHR43861">
    <property type="entry name" value="TRANS-ACONITATE 2-METHYLTRANSFERASE-RELATED"/>
    <property type="match status" value="1"/>
</dbReference>
<dbReference type="Pfam" id="PF08003">
    <property type="entry name" value="Methyltransf_9"/>
    <property type="match status" value="1"/>
</dbReference>
<dbReference type="SUPFAM" id="SSF53335">
    <property type="entry name" value="S-adenosyl-L-methionine-dependent methyltransferases"/>
    <property type="match status" value="1"/>
</dbReference>
<sequence length="291" mass="33920">MQENLLEKQFLNHPLYTKIQELKALNLTCNFSLDDSVNLSTNSQAKDEILAITKELKPWRKGPFKIDDLFIDTEWQSFIKFNILKPFMNEISQKCVADIGCNNGYYMFKMLEFNPAKLIGFDPSIKYRLQFELINALAKTPIKYELLGVEDLPSYSLKFDVIFCLGVIYHRSDPVKMLKDLKAGLNKNGVVFLDTMYIEDEREIALVPNKTYSKIPNIYFVPSISALKNWCERAGFKEFEVLATKKTDENEQRKTEWIDSFSLENFLDPKDKNLTIEGYEAPKRVYIRIKI</sequence>
<gene>
    <name evidence="1" type="primary">cmoB</name>
    <name type="ordered locus">CJJ81176_0995</name>
</gene>
<accession>A1VZW5</accession>
<organism>
    <name type="scientific">Campylobacter jejuni subsp. jejuni serotype O:23/36 (strain 81-176)</name>
    <dbReference type="NCBI Taxonomy" id="354242"/>
    <lineage>
        <taxon>Bacteria</taxon>
        <taxon>Pseudomonadati</taxon>
        <taxon>Campylobacterota</taxon>
        <taxon>Epsilonproteobacteria</taxon>
        <taxon>Campylobacterales</taxon>
        <taxon>Campylobacteraceae</taxon>
        <taxon>Campylobacter</taxon>
    </lineage>
</organism>
<protein>
    <recommendedName>
        <fullName evidence="1">tRNA U34 carboxymethyltransferase</fullName>
        <ecNumber evidence="1">2.5.1.-</ecNumber>
    </recommendedName>
</protein>
<feature type="chain" id="PRO_0000313907" description="tRNA U34 carboxymethyltransferase">
    <location>
        <begin position="1"/>
        <end position="291"/>
    </location>
</feature>
<feature type="binding site" evidence="1">
    <location>
        <position position="61"/>
    </location>
    <ligand>
        <name>carboxy-S-adenosyl-L-methionine</name>
        <dbReference type="ChEBI" id="CHEBI:134278"/>
    </ligand>
</feature>
<feature type="binding site" evidence="1">
    <location>
        <position position="75"/>
    </location>
    <ligand>
        <name>carboxy-S-adenosyl-L-methionine</name>
        <dbReference type="ChEBI" id="CHEBI:134278"/>
    </ligand>
</feature>
<feature type="binding site" evidence="1">
    <location>
        <position position="80"/>
    </location>
    <ligand>
        <name>carboxy-S-adenosyl-L-methionine</name>
        <dbReference type="ChEBI" id="CHEBI:134278"/>
    </ligand>
</feature>
<feature type="binding site" evidence="1">
    <location>
        <position position="100"/>
    </location>
    <ligand>
        <name>carboxy-S-adenosyl-L-methionine</name>
        <dbReference type="ChEBI" id="CHEBI:134278"/>
    </ligand>
</feature>
<feature type="binding site" evidence="1">
    <location>
        <begin position="122"/>
        <end position="124"/>
    </location>
    <ligand>
        <name>carboxy-S-adenosyl-L-methionine</name>
        <dbReference type="ChEBI" id="CHEBI:134278"/>
    </ligand>
</feature>
<feature type="binding site" evidence="1">
    <location>
        <begin position="149"/>
        <end position="150"/>
    </location>
    <ligand>
        <name>carboxy-S-adenosyl-L-methionine</name>
        <dbReference type="ChEBI" id="CHEBI:134278"/>
    </ligand>
</feature>
<feature type="binding site" evidence="1">
    <location>
        <position position="169"/>
    </location>
    <ligand>
        <name>carboxy-S-adenosyl-L-methionine</name>
        <dbReference type="ChEBI" id="CHEBI:134278"/>
    </ligand>
</feature>
<feature type="binding site" evidence="1">
    <location>
        <position position="284"/>
    </location>
    <ligand>
        <name>carboxy-S-adenosyl-L-methionine</name>
        <dbReference type="ChEBI" id="CHEBI:134278"/>
    </ligand>
</feature>